<keyword id="KW-1185">Reference proteome</keyword>
<name>YRY5_CAEEL</name>
<evidence type="ECO:0000256" key="1">
    <source>
        <dbReference type="SAM" id="MobiDB-lite"/>
    </source>
</evidence>
<gene>
    <name type="ORF">T15H9.5</name>
</gene>
<proteinExistence type="predicted"/>
<accession>Q09355</accession>
<sequence>MLCAKNKKDPKPPPASFSETSKVQNVQNTQPKPAAPSQMSIDESHSKNQKLPSAEKSVEECKKPVSPEKKKSPIKVLSEKKLKSKKKEEDKEPDEKVEKDVKKEVKADNNEPLVKNLKIAKKEQEEENPKTDLESHKDEAEAKKKESRRQKKMRNKNSKEGSVEKMEKSEKAY</sequence>
<feature type="chain" id="PRO_0000065463" description="Uncharacterized protein T15H9.5">
    <location>
        <begin position="1"/>
        <end position="173"/>
    </location>
</feature>
<feature type="region of interest" description="Disordered" evidence="1">
    <location>
        <begin position="1"/>
        <end position="173"/>
    </location>
</feature>
<feature type="compositionally biased region" description="Basic and acidic residues" evidence="1">
    <location>
        <begin position="1"/>
        <end position="11"/>
    </location>
</feature>
<feature type="compositionally biased region" description="Polar residues" evidence="1">
    <location>
        <begin position="17"/>
        <end position="41"/>
    </location>
</feature>
<feature type="compositionally biased region" description="Basic and acidic residues" evidence="1">
    <location>
        <begin position="56"/>
        <end position="109"/>
    </location>
</feature>
<feature type="compositionally biased region" description="Basic and acidic residues" evidence="1">
    <location>
        <begin position="120"/>
        <end position="144"/>
    </location>
</feature>
<feature type="compositionally biased region" description="Basic residues" evidence="1">
    <location>
        <begin position="145"/>
        <end position="156"/>
    </location>
</feature>
<feature type="compositionally biased region" description="Basic and acidic residues" evidence="1">
    <location>
        <begin position="157"/>
        <end position="173"/>
    </location>
</feature>
<organism>
    <name type="scientific">Caenorhabditis elegans</name>
    <dbReference type="NCBI Taxonomy" id="6239"/>
    <lineage>
        <taxon>Eukaryota</taxon>
        <taxon>Metazoa</taxon>
        <taxon>Ecdysozoa</taxon>
        <taxon>Nematoda</taxon>
        <taxon>Chromadorea</taxon>
        <taxon>Rhabditida</taxon>
        <taxon>Rhabditina</taxon>
        <taxon>Rhabditomorpha</taxon>
        <taxon>Rhabditoidea</taxon>
        <taxon>Rhabditidae</taxon>
        <taxon>Peloderinae</taxon>
        <taxon>Caenorhabditis</taxon>
    </lineage>
</organism>
<protein>
    <recommendedName>
        <fullName>Uncharacterized protein T15H9.5</fullName>
    </recommendedName>
</protein>
<reference key="1">
    <citation type="journal article" date="1998" name="Science">
        <title>Genome sequence of the nematode C. elegans: a platform for investigating biology.</title>
        <authorList>
            <consortium name="The C. elegans sequencing consortium"/>
        </authorList>
    </citation>
    <scope>NUCLEOTIDE SEQUENCE [LARGE SCALE GENOMIC DNA]</scope>
    <source>
        <strain>Bristol N2</strain>
    </source>
</reference>
<dbReference type="EMBL" id="Z47356">
    <property type="protein sequence ID" value="CAA87418.1"/>
    <property type="molecule type" value="Genomic_DNA"/>
</dbReference>
<dbReference type="PIR" id="T24942">
    <property type="entry name" value="T24942"/>
</dbReference>
<dbReference type="RefSeq" id="NP_496068.1">
    <property type="nucleotide sequence ID" value="NM_063667.3"/>
</dbReference>
<dbReference type="SMR" id="Q09355"/>
<dbReference type="FunCoup" id="Q09355">
    <property type="interactions" value="46"/>
</dbReference>
<dbReference type="PaxDb" id="6239-T15H9.5"/>
<dbReference type="EnsemblMetazoa" id="T15H9.5.1">
    <property type="protein sequence ID" value="T15H9.5.1"/>
    <property type="gene ID" value="WBGene00011790"/>
</dbReference>
<dbReference type="GeneID" id="188541"/>
<dbReference type="KEGG" id="cel:CELE_T15H9.5"/>
<dbReference type="UCSC" id="T15H9.5">
    <property type="organism name" value="c. elegans"/>
</dbReference>
<dbReference type="AGR" id="WB:WBGene00011790"/>
<dbReference type="CTD" id="188541"/>
<dbReference type="WormBase" id="T15H9.5">
    <property type="protein sequence ID" value="CE01668"/>
    <property type="gene ID" value="WBGene00011790"/>
</dbReference>
<dbReference type="eggNOG" id="ENOG502TJ0Y">
    <property type="taxonomic scope" value="Eukaryota"/>
</dbReference>
<dbReference type="GeneTree" id="ENSGT00970000198351"/>
<dbReference type="HOGENOM" id="CLU_1587990_0_0_1"/>
<dbReference type="InParanoid" id="Q09355"/>
<dbReference type="OMA" id="VWATSVF"/>
<dbReference type="PRO" id="PR:Q09355"/>
<dbReference type="Proteomes" id="UP000001940">
    <property type="component" value="Chromosome II"/>
</dbReference>
<dbReference type="Bgee" id="WBGene00011790">
    <property type="expression patterns" value="Expressed in embryo and 2 other cell types or tissues"/>
</dbReference>